<dbReference type="EMBL" id="CP001144">
    <property type="protein sequence ID" value="ACH78074.1"/>
    <property type="molecule type" value="Genomic_DNA"/>
</dbReference>
<dbReference type="RefSeq" id="WP_000729185.1">
    <property type="nucleotide sequence ID" value="NC_011205.1"/>
</dbReference>
<dbReference type="SMR" id="B5FJK3"/>
<dbReference type="GeneID" id="93778678"/>
<dbReference type="KEGG" id="sed:SeD_A3796"/>
<dbReference type="HOGENOM" id="CLU_093315_2_2_6"/>
<dbReference type="Proteomes" id="UP000008322">
    <property type="component" value="Chromosome"/>
</dbReference>
<dbReference type="GO" id="GO:0005829">
    <property type="term" value="C:cytosol"/>
    <property type="evidence" value="ECO:0007669"/>
    <property type="project" value="UniProtKB-ARBA"/>
</dbReference>
<dbReference type="GO" id="GO:1990904">
    <property type="term" value="C:ribonucleoprotein complex"/>
    <property type="evidence" value="ECO:0007669"/>
    <property type="project" value="UniProtKB-KW"/>
</dbReference>
<dbReference type="GO" id="GO:0005840">
    <property type="term" value="C:ribosome"/>
    <property type="evidence" value="ECO:0007669"/>
    <property type="project" value="UniProtKB-KW"/>
</dbReference>
<dbReference type="GO" id="GO:0019843">
    <property type="term" value="F:rRNA binding"/>
    <property type="evidence" value="ECO:0007669"/>
    <property type="project" value="UniProtKB-UniRule"/>
</dbReference>
<dbReference type="GO" id="GO:0003735">
    <property type="term" value="F:structural constituent of ribosome"/>
    <property type="evidence" value="ECO:0007669"/>
    <property type="project" value="InterPro"/>
</dbReference>
<dbReference type="GO" id="GO:0006412">
    <property type="term" value="P:translation"/>
    <property type="evidence" value="ECO:0007669"/>
    <property type="project" value="UniProtKB-UniRule"/>
</dbReference>
<dbReference type="CDD" id="cd06089">
    <property type="entry name" value="KOW_RPL26"/>
    <property type="match status" value="1"/>
</dbReference>
<dbReference type="FunFam" id="2.30.30.30:FF:000004">
    <property type="entry name" value="50S ribosomal protein L24"/>
    <property type="match status" value="1"/>
</dbReference>
<dbReference type="Gene3D" id="2.30.30.30">
    <property type="match status" value="1"/>
</dbReference>
<dbReference type="HAMAP" id="MF_01326_B">
    <property type="entry name" value="Ribosomal_uL24_B"/>
    <property type="match status" value="1"/>
</dbReference>
<dbReference type="InterPro" id="IPR005824">
    <property type="entry name" value="KOW"/>
</dbReference>
<dbReference type="InterPro" id="IPR014722">
    <property type="entry name" value="Rib_uL2_dom2"/>
</dbReference>
<dbReference type="InterPro" id="IPR003256">
    <property type="entry name" value="Ribosomal_uL24"/>
</dbReference>
<dbReference type="InterPro" id="IPR005825">
    <property type="entry name" value="Ribosomal_uL24_CS"/>
</dbReference>
<dbReference type="InterPro" id="IPR041988">
    <property type="entry name" value="Ribosomal_uL24_KOW"/>
</dbReference>
<dbReference type="InterPro" id="IPR008991">
    <property type="entry name" value="Translation_prot_SH3-like_sf"/>
</dbReference>
<dbReference type="NCBIfam" id="TIGR01079">
    <property type="entry name" value="rplX_bact"/>
    <property type="match status" value="1"/>
</dbReference>
<dbReference type="PANTHER" id="PTHR12903">
    <property type="entry name" value="MITOCHONDRIAL RIBOSOMAL PROTEIN L24"/>
    <property type="match status" value="1"/>
</dbReference>
<dbReference type="Pfam" id="PF00467">
    <property type="entry name" value="KOW"/>
    <property type="match status" value="1"/>
</dbReference>
<dbReference type="Pfam" id="PF17136">
    <property type="entry name" value="ribosomal_L24"/>
    <property type="match status" value="1"/>
</dbReference>
<dbReference type="SMART" id="SM00739">
    <property type="entry name" value="KOW"/>
    <property type="match status" value="1"/>
</dbReference>
<dbReference type="SUPFAM" id="SSF50104">
    <property type="entry name" value="Translation proteins SH3-like domain"/>
    <property type="match status" value="1"/>
</dbReference>
<dbReference type="PROSITE" id="PS01108">
    <property type="entry name" value="RIBOSOMAL_L24"/>
    <property type="match status" value="1"/>
</dbReference>
<name>RL24_SALDC</name>
<reference key="1">
    <citation type="journal article" date="2011" name="J. Bacteriol.">
        <title>Comparative genomics of 28 Salmonella enterica isolates: evidence for CRISPR-mediated adaptive sublineage evolution.</title>
        <authorList>
            <person name="Fricke W.F."/>
            <person name="Mammel M.K."/>
            <person name="McDermott P.F."/>
            <person name="Tartera C."/>
            <person name="White D.G."/>
            <person name="Leclerc J.E."/>
            <person name="Ravel J."/>
            <person name="Cebula T.A."/>
        </authorList>
    </citation>
    <scope>NUCLEOTIDE SEQUENCE [LARGE SCALE GENOMIC DNA]</scope>
    <source>
        <strain>CT_02021853</strain>
    </source>
</reference>
<sequence>MAAKIRRDDEVIVLTGKDKGKRGKVKNVLSSGKVIVEGINLVKKHQKPVPALNQPGGIVEKEAAIQVSNVAIFNAATGKADRVGFRFEDGKKVRFFKSNSETIK</sequence>
<feature type="chain" id="PRO_1000142032" description="Large ribosomal subunit protein uL24">
    <location>
        <begin position="1"/>
        <end position="104"/>
    </location>
</feature>
<accession>B5FJK3</accession>
<organism>
    <name type="scientific">Salmonella dublin (strain CT_02021853)</name>
    <dbReference type="NCBI Taxonomy" id="439851"/>
    <lineage>
        <taxon>Bacteria</taxon>
        <taxon>Pseudomonadati</taxon>
        <taxon>Pseudomonadota</taxon>
        <taxon>Gammaproteobacteria</taxon>
        <taxon>Enterobacterales</taxon>
        <taxon>Enterobacteriaceae</taxon>
        <taxon>Salmonella</taxon>
    </lineage>
</organism>
<evidence type="ECO:0000255" key="1">
    <source>
        <dbReference type="HAMAP-Rule" id="MF_01326"/>
    </source>
</evidence>
<evidence type="ECO:0000305" key="2"/>
<gene>
    <name evidence="1" type="primary">rplX</name>
    <name type="ordered locus">SeD_A3796</name>
</gene>
<proteinExistence type="inferred from homology"/>
<comment type="function">
    <text evidence="1">One of two assembly initiator proteins, it binds directly to the 5'-end of the 23S rRNA, where it nucleates assembly of the 50S subunit.</text>
</comment>
<comment type="function">
    <text evidence="1">One of the proteins that surrounds the polypeptide exit tunnel on the outside of the subunit.</text>
</comment>
<comment type="subunit">
    <text evidence="1">Part of the 50S ribosomal subunit.</text>
</comment>
<comment type="similarity">
    <text evidence="1">Belongs to the universal ribosomal protein uL24 family.</text>
</comment>
<keyword id="KW-0687">Ribonucleoprotein</keyword>
<keyword id="KW-0689">Ribosomal protein</keyword>
<keyword id="KW-0694">RNA-binding</keyword>
<keyword id="KW-0699">rRNA-binding</keyword>
<protein>
    <recommendedName>
        <fullName evidence="1">Large ribosomal subunit protein uL24</fullName>
    </recommendedName>
    <alternativeName>
        <fullName evidence="2">50S ribosomal protein L24</fullName>
    </alternativeName>
</protein>